<organism>
    <name type="scientific">Paraburkholderia phymatum (strain DSM 17167 / CIP 108236 / LMG 21445 / STM815)</name>
    <name type="common">Burkholderia phymatum</name>
    <dbReference type="NCBI Taxonomy" id="391038"/>
    <lineage>
        <taxon>Bacteria</taxon>
        <taxon>Pseudomonadati</taxon>
        <taxon>Pseudomonadota</taxon>
        <taxon>Betaproteobacteria</taxon>
        <taxon>Burkholderiales</taxon>
        <taxon>Burkholderiaceae</taxon>
        <taxon>Paraburkholderia</taxon>
    </lineage>
</organism>
<comment type="function">
    <text evidence="1">Involved in peptide bond synthesis. Stimulates efficient translation and peptide-bond synthesis on native or reconstituted 70S ribosomes in vitro. Probably functions indirectly by altering the affinity of the ribosome for aminoacyl-tRNA, thus increasing their reactivity as acceptors for peptidyl transferase.</text>
</comment>
<comment type="pathway">
    <text evidence="1">Protein biosynthesis; polypeptide chain elongation.</text>
</comment>
<comment type="subcellular location">
    <subcellularLocation>
        <location evidence="1">Cytoplasm</location>
    </subcellularLocation>
</comment>
<comment type="similarity">
    <text evidence="1">Belongs to the elongation factor P family.</text>
</comment>
<feature type="chain" id="PRO_1000096131" description="Elongation factor P">
    <location>
        <begin position="1"/>
        <end position="185"/>
    </location>
</feature>
<name>EFP_PARP8</name>
<reference key="1">
    <citation type="journal article" date="2014" name="Stand. Genomic Sci.">
        <title>Complete genome sequence of Burkholderia phymatum STM815(T), a broad host range and efficient nitrogen-fixing symbiont of Mimosa species.</title>
        <authorList>
            <person name="Moulin L."/>
            <person name="Klonowska A."/>
            <person name="Caroline B."/>
            <person name="Booth K."/>
            <person name="Vriezen J.A."/>
            <person name="Melkonian R."/>
            <person name="James E.K."/>
            <person name="Young J.P."/>
            <person name="Bena G."/>
            <person name="Hauser L."/>
            <person name="Land M."/>
            <person name="Kyrpides N."/>
            <person name="Bruce D."/>
            <person name="Chain P."/>
            <person name="Copeland A."/>
            <person name="Pitluck S."/>
            <person name="Woyke T."/>
            <person name="Lizotte-Waniewski M."/>
            <person name="Bristow J."/>
            <person name="Riley M."/>
        </authorList>
    </citation>
    <scope>NUCLEOTIDE SEQUENCE [LARGE SCALE GENOMIC DNA]</scope>
    <source>
        <strain>DSM 17167 / CIP 108236 / LMG 21445 / STM815</strain>
    </source>
</reference>
<accession>B2JFL0</accession>
<protein>
    <recommendedName>
        <fullName evidence="1">Elongation factor P</fullName>
        <shortName evidence="1">EF-P</shortName>
    </recommendedName>
</protein>
<evidence type="ECO:0000255" key="1">
    <source>
        <dbReference type="HAMAP-Rule" id="MF_00141"/>
    </source>
</evidence>
<keyword id="KW-0963">Cytoplasm</keyword>
<keyword id="KW-0251">Elongation factor</keyword>
<keyword id="KW-0648">Protein biosynthesis</keyword>
<keyword id="KW-1185">Reference proteome</keyword>
<gene>
    <name evidence="1" type="primary">efp</name>
    <name type="ordered locus">Bphy_0849</name>
</gene>
<dbReference type="EMBL" id="CP001043">
    <property type="protein sequence ID" value="ACC70038.1"/>
    <property type="molecule type" value="Genomic_DNA"/>
</dbReference>
<dbReference type="RefSeq" id="WP_012400257.1">
    <property type="nucleotide sequence ID" value="NZ_CADFGH010000007.1"/>
</dbReference>
<dbReference type="SMR" id="B2JFL0"/>
<dbReference type="STRING" id="391038.Bphy_0849"/>
<dbReference type="KEGG" id="bph:Bphy_0849"/>
<dbReference type="eggNOG" id="COG0231">
    <property type="taxonomic scope" value="Bacteria"/>
</dbReference>
<dbReference type="HOGENOM" id="CLU_074944_2_1_4"/>
<dbReference type="OrthoDB" id="9801844at2"/>
<dbReference type="UniPathway" id="UPA00345"/>
<dbReference type="Proteomes" id="UP000001192">
    <property type="component" value="Chromosome 1"/>
</dbReference>
<dbReference type="GO" id="GO:0005737">
    <property type="term" value="C:cytoplasm"/>
    <property type="evidence" value="ECO:0007669"/>
    <property type="project" value="UniProtKB-SubCell"/>
</dbReference>
<dbReference type="GO" id="GO:0003746">
    <property type="term" value="F:translation elongation factor activity"/>
    <property type="evidence" value="ECO:0007669"/>
    <property type="project" value="UniProtKB-UniRule"/>
</dbReference>
<dbReference type="GO" id="GO:0043043">
    <property type="term" value="P:peptide biosynthetic process"/>
    <property type="evidence" value="ECO:0007669"/>
    <property type="project" value="InterPro"/>
</dbReference>
<dbReference type="CDD" id="cd04470">
    <property type="entry name" value="S1_EF-P_repeat_1"/>
    <property type="match status" value="1"/>
</dbReference>
<dbReference type="CDD" id="cd05794">
    <property type="entry name" value="S1_EF-P_repeat_2"/>
    <property type="match status" value="1"/>
</dbReference>
<dbReference type="FunFam" id="2.30.30.30:FF:000003">
    <property type="entry name" value="Elongation factor P"/>
    <property type="match status" value="1"/>
</dbReference>
<dbReference type="FunFam" id="2.40.50.140:FF:000004">
    <property type="entry name" value="Elongation factor P"/>
    <property type="match status" value="1"/>
</dbReference>
<dbReference type="FunFam" id="2.40.50.140:FF:000009">
    <property type="entry name" value="Elongation factor P"/>
    <property type="match status" value="1"/>
</dbReference>
<dbReference type="Gene3D" id="2.30.30.30">
    <property type="match status" value="1"/>
</dbReference>
<dbReference type="Gene3D" id="2.40.50.140">
    <property type="entry name" value="Nucleic acid-binding proteins"/>
    <property type="match status" value="2"/>
</dbReference>
<dbReference type="HAMAP" id="MF_00141">
    <property type="entry name" value="EF_P"/>
    <property type="match status" value="1"/>
</dbReference>
<dbReference type="InterPro" id="IPR015365">
    <property type="entry name" value="Elong-fact-P_C"/>
</dbReference>
<dbReference type="InterPro" id="IPR012340">
    <property type="entry name" value="NA-bd_OB-fold"/>
</dbReference>
<dbReference type="InterPro" id="IPR014722">
    <property type="entry name" value="Rib_uL2_dom2"/>
</dbReference>
<dbReference type="InterPro" id="IPR020599">
    <property type="entry name" value="Transl_elong_fac_P/YeiP"/>
</dbReference>
<dbReference type="InterPro" id="IPR013185">
    <property type="entry name" value="Transl_elong_KOW-like"/>
</dbReference>
<dbReference type="InterPro" id="IPR001059">
    <property type="entry name" value="Transl_elong_P/YeiP_cen"/>
</dbReference>
<dbReference type="InterPro" id="IPR013852">
    <property type="entry name" value="Transl_elong_P/YeiP_CS"/>
</dbReference>
<dbReference type="InterPro" id="IPR011768">
    <property type="entry name" value="Transl_elongation_fac_P"/>
</dbReference>
<dbReference type="InterPro" id="IPR008991">
    <property type="entry name" value="Translation_prot_SH3-like_sf"/>
</dbReference>
<dbReference type="NCBIfam" id="TIGR00038">
    <property type="entry name" value="efp"/>
    <property type="match status" value="1"/>
</dbReference>
<dbReference type="NCBIfam" id="NF001810">
    <property type="entry name" value="PRK00529.1"/>
    <property type="match status" value="1"/>
</dbReference>
<dbReference type="PANTHER" id="PTHR30053">
    <property type="entry name" value="ELONGATION FACTOR P"/>
    <property type="match status" value="1"/>
</dbReference>
<dbReference type="PANTHER" id="PTHR30053:SF12">
    <property type="entry name" value="ELONGATION FACTOR P (EF-P) FAMILY PROTEIN"/>
    <property type="match status" value="1"/>
</dbReference>
<dbReference type="Pfam" id="PF01132">
    <property type="entry name" value="EFP"/>
    <property type="match status" value="1"/>
</dbReference>
<dbReference type="Pfam" id="PF08207">
    <property type="entry name" value="EFP_N"/>
    <property type="match status" value="1"/>
</dbReference>
<dbReference type="Pfam" id="PF09285">
    <property type="entry name" value="Elong-fact-P_C"/>
    <property type="match status" value="1"/>
</dbReference>
<dbReference type="PIRSF" id="PIRSF005901">
    <property type="entry name" value="EF-P"/>
    <property type="match status" value="1"/>
</dbReference>
<dbReference type="SMART" id="SM01185">
    <property type="entry name" value="EFP"/>
    <property type="match status" value="1"/>
</dbReference>
<dbReference type="SMART" id="SM00841">
    <property type="entry name" value="Elong-fact-P_C"/>
    <property type="match status" value="1"/>
</dbReference>
<dbReference type="SUPFAM" id="SSF50249">
    <property type="entry name" value="Nucleic acid-binding proteins"/>
    <property type="match status" value="2"/>
</dbReference>
<dbReference type="SUPFAM" id="SSF50104">
    <property type="entry name" value="Translation proteins SH3-like domain"/>
    <property type="match status" value="1"/>
</dbReference>
<dbReference type="PROSITE" id="PS01275">
    <property type="entry name" value="EFP"/>
    <property type="match status" value="1"/>
</dbReference>
<proteinExistence type="inferred from homology"/>
<sequence length="185" mass="20842">MKIAQELRTGNVVMIGNDAMVVQKAEYNKSGRNAAVVKMKFKNLLTGAGMETVYKADDKFDVVVLDRKEVTYSYFADPMYVFMDADYNQYEVEAEMMGDALNYLEDGMACEVVFYNEKAISVELPTTLVREIIYTEPAVKGDTSSGKVLKTAKLNTGFELQVPLFCNIGDKIEIDTRTNEYRSRA</sequence>